<dbReference type="EC" id="3.1.3.16"/>
<dbReference type="EMBL" id="Z54236">
    <property type="protein sequence ID" value="CAA90981.4"/>
    <property type="molecule type" value="Genomic_DNA"/>
</dbReference>
<dbReference type="PIR" id="T19505">
    <property type="entry name" value="T19505"/>
</dbReference>
<dbReference type="RefSeq" id="NP_501547.3">
    <property type="nucleotide sequence ID" value="NM_069146.6"/>
</dbReference>
<dbReference type="SMR" id="P48460"/>
<dbReference type="FunCoup" id="P48460">
    <property type="interactions" value="178"/>
</dbReference>
<dbReference type="STRING" id="6239.C27B7.6.1"/>
<dbReference type="PaxDb" id="6239-C27B7.6"/>
<dbReference type="EnsemblMetazoa" id="C27B7.6.1">
    <property type="protein sequence ID" value="C27B7.6.1"/>
    <property type="gene ID" value="WBGene00007763"/>
</dbReference>
<dbReference type="GeneID" id="182956"/>
<dbReference type="KEGG" id="cel:CELE_C27B7.6"/>
<dbReference type="UCSC" id="C27B7.6">
    <property type="organism name" value="c. elegans"/>
</dbReference>
<dbReference type="AGR" id="WB:WBGene00007763"/>
<dbReference type="CTD" id="182956"/>
<dbReference type="WormBase" id="C27B7.6">
    <property type="protein sequence ID" value="CE43510"/>
    <property type="gene ID" value="WBGene00007763"/>
</dbReference>
<dbReference type="eggNOG" id="KOG0374">
    <property type="taxonomic scope" value="Eukaryota"/>
</dbReference>
<dbReference type="GeneTree" id="ENSGT00970000196421"/>
<dbReference type="HOGENOM" id="CLU_004962_0_3_1"/>
<dbReference type="InParanoid" id="P48460"/>
<dbReference type="OMA" id="TEIHELC"/>
<dbReference type="OrthoDB" id="5793670at2759"/>
<dbReference type="PhylomeDB" id="P48460"/>
<dbReference type="PRO" id="PR:P48460"/>
<dbReference type="Proteomes" id="UP000001940">
    <property type="component" value="Chromosome IV"/>
</dbReference>
<dbReference type="Bgee" id="WBGene00007763">
    <property type="expression patterns" value="Expressed in adult organism and 1 other cell type or tissue"/>
</dbReference>
<dbReference type="GO" id="GO:0005737">
    <property type="term" value="C:cytoplasm"/>
    <property type="evidence" value="ECO:0000318"/>
    <property type="project" value="GO_Central"/>
</dbReference>
<dbReference type="GO" id="GO:0005634">
    <property type="term" value="C:nucleus"/>
    <property type="evidence" value="ECO:0000318"/>
    <property type="project" value="GO_Central"/>
</dbReference>
<dbReference type="GO" id="GO:0046872">
    <property type="term" value="F:metal ion binding"/>
    <property type="evidence" value="ECO:0007669"/>
    <property type="project" value="UniProtKB-KW"/>
</dbReference>
<dbReference type="GO" id="GO:0004722">
    <property type="term" value="F:protein serine/threonine phosphatase activity"/>
    <property type="evidence" value="ECO:0000318"/>
    <property type="project" value="GO_Central"/>
</dbReference>
<dbReference type="CDD" id="cd00144">
    <property type="entry name" value="MPP_PPP_family"/>
    <property type="match status" value="1"/>
</dbReference>
<dbReference type="FunFam" id="3.60.21.10:FF:000145">
    <property type="entry name" value="Serine/threonine-protein phosphatase"/>
    <property type="match status" value="1"/>
</dbReference>
<dbReference type="Gene3D" id="3.60.21.10">
    <property type="match status" value="1"/>
</dbReference>
<dbReference type="InterPro" id="IPR004843">
    <property type="entry name" value="Calcineurin-like_PHP_ApaH"/>
</dbReference>
<dbReference type="InterPro" id="IPR029052">
    <property type="entry name" value="Metallo-depent_PP-like"/>
</dbReference>
<dbReference type="InterPro" id="IPR050341">
    <property type="entry name" value="PP1_catalytic_subunit"/>
</dbReference>
<dbReference type="InterPro" id="IPR006186">
    <property type="entry name" value="Ser/Thr-sp_prot-phosphatase"/>
</dbReference>
<dbReference type="PANTHER" id="PTHR11668">
    <property type="entry name" value="SERINE/THREONINE PROTEIN PHOSPHATASE"/>
    <property type="match status" value="1"/>
</dbReference>
<dbReference type="PANTHER" id="PTHR11668:SF285">
    <property type="entry name" value="SERINE_THREONINE-PROTEIN PHOSPHATASE-RELATED"/>
    <property type="match status" value="1"/>
</dbReference>
<dbReference type="Pfam" id="PF00149">
    <property type="entry name" value="Metallophos"/>
    <property type="match status" value="1"/>
</dbReference>
<dbReference type="PRINTS" id="PR00114">
    <property type="entry name" value="STPHPHTASE"/>
</dbReference>
<dbReference type="SMART" id="SM00156">
    <property type="entry name" value="PP2Ac"/>
    <property type="match status" value="1"/>
</dbReference>
<dbReference type="SUPFAM" id="SSF56300">
    <property type="entry name" value="Metallo-dependent phosphatases"/>
    <property type="match status" value="1"/>
</dbReference>
<dbReference type="PROSITE" id="PS00125">
    <property type="entry name" value="SER_THR_PHOSPHATASE"/>
    <property type="match status" value="1"/>
</dbReference>
<proteinExistence type="inferred from homology"/>
<organism>
    <name type="scientific">Caenorhabditis elegans</name>
    <dbReference type="NCBI Taxonomy" id="6239"/>
    <lineage>
        <taxon>Eukaryota</taxon>
        <taxon>Metazoa</taxon>
        <taxon>Ecdysozoa</taxon>
        <taxon>Nematoda</taxon>
        <taxon>Chromadorea</taxon>
        <taxon>Rhabditida</taxon>
        <taxon>Rhabditina</taxon>
        <taxon>Rhabditomorpha</taxon>
        <taxon>Rhabditoidea</taxon>
        <taxon>Rhabditidae</taxon>
        <taxon>Peloderinae</taxon>
        <taxon>Caenorhabditis</taxon>
    </lineage>
</organism>
<feature type="chain" id="PRO_0000058916" description="Putative serine/threonine-protein phosphatase C27B7.6">
    <location>
        <begin position="1"/>
        <end position="454"/>
    </location>
</feature>
<feature type="region of interest" description="Disordered" evidence="2">
    <location>
        <begin position="414"/>
        <end position="454"/>
    </location>
</feature>
<feature type="compositionally biased region" description="Pro residues" evidence="2">
    <location>
        <begin position="424"/>
        <end position="447"/>
    </location>
</feature>
<feature type="active site" description="Proton donor" evidence="1">
    <location>
        <position position="126"/>
    </location>
</feature>
<feature type="binding site" evidence="1">
    <location>
        <position position="65"/>
    </location>
    <ligand>
        <name>Mn(2+)</name>
        <dbReference type="ChEBI" id="CHEBI:29035"/>
        <label>1</label>
    </ligand>
</feature>
<feature type="binding site" evidence="1">
    <location>
        <position position="67"/>
    </location>
    <ligand>
        <name>Mn(2+)</name>
        <dbReference type="ChEBI" id="CHEBI:29035"/>
        <label>1</label>
    </ligand>
</feature>
<feature type="binding site" evidence="1">
    <location>
        <position position="93"/>
    </location>
    <ligand>
        <name>Mn(2+)</name>
        <dbReference type="ChEBI" id="CHEBI:29035"/>
        <label>1</label>
    </ligand>
</feature>
<feature type="binding site" evidence="1">
    <location>
        <position position="93"/>
    </location>
    <ligand>
        <name>Mn(2+)</name>
        <dbReference type="ChEBI" id="CHEBI:29035"/>
        <label>2</label>
    </ligand>
</feature>
<feature type="binding site" evidence="1">
    <location>
        <position position="125"/>
    </location>
    <ligand>
        <name>Mn(2+)</name>
        <dbReference type="ChEBI" id="CHEBI:29035"/>
        <label>2</label>
    </ligand>
</feature>
<feature type="binding site" evidence="1">
    <location>
        <position position="174"/>
    </location>
    <ligand>
        <name>Mn(2+)</name>
        <dbReference type="ChEBI" id="CHEBI:29035"/>
        <label>2</label>
    </ligand>
</feature>
<feature type="binding site" evidence="1">
    <location>
        <position position="252"/>
    </location>
    <ligand>
        <name>Mn(2+)</name>
        <dbReference type="ChEBI" id="CHEBI:29035"/>
        <label>2</label>
    </ligand>
</feature>
<comment type="catalytic activity">
    <reaction>
        <text>O-phospho-L-seryl-[protein] + H2O = L-seryl-[protein] + phosphate</text>
        <dbReference type="Rhea" id="RHEA:20629"/>
        <dbReference type="Rhea" id="RHEA-COMP:9863"/>
        <dbReference type="Rhea" id="RHEA-COMP:11604"/>
        <dbReference type="ChEBI" id="CHEBI:15377"/>
        <dbReference type="ChEBI" id="CHEBI:29999"/>
        <dbReference type="ChEBI" id="CHEBI:43474"/>
        <dbReference type="ChEBI" id="CHEBI:83421"/>
        <dbReference type="EC" id="3.1.3.16"/>
    </reaction>
</comment>
<comment type="catalytic activity">
    <reaction>
        <text>O-phospho-L-threonyl-[protein] + H2O = L-threonyl-[protein] + phosphate</text>
        <dbReference type="Rhea" id="RHEA:47004"/>
        <dbReference type="Rhea" id="RHEA-COMP:11060"/>
        <dbReference type="Rhea" id="RHEA-COMP:11605"/>
        <dbReference type="ChEBI" id="CHEBI:15377"/>
        <dbReference type="ChEBI" id="CHEBI:30013"/>
        <dbReference type="ChEBI" id="CHEBI:43474"/>
        <dbReference type="ChEBI" id="CHEBI:61977"/>
        <dbReference type="EC" id="3.1.3.16"/>
    </reaction>
</comment>
<comment type="cofactor">
    <cofactor evidence="1">
        <name>Mn(2+)</name>
        <dbReference type="ChEBI" id="CHEBI:29035"/>
    </cofactor>
    <text evidence="1">Binds 2 manganese ions per subunit.</text>
</comment>
<comment type="similarity">
    <text evidence="3">Belongs to the PPP phosphatase family. PP-1 subfamily.</text>
</comment>
<accession>P48460</accession>
<gene>
    <name type="ORF">C27B7.6</name>
</gene>
<protein>
    <recommendedName>
        <fullName>Putative serine/threonine-protein phosphatase C27B7.6</fullName>
        <ecNumber>3.1.3.16</ecNumber>
    </recommendedName>
</protein>
<keyword id="KW-0378">Hydrolase</keyword>
<keyword id="KW-0464">Manganese</keyword>
<keyword id="KW-0479">Metal-binding</keyword>
<keyword id="KW-0904">Protein phosphatase</keyword>
<keyword id="KW-1185">Reference proteome</keyword>
<evidence type="ECO:0000250" key="1"/>
<evidence type="ECO:0000256" key="2">
    <source>
        <dbReference type="SAM" id="MobiDB-lite"/>
    </source>
</evidence>
<evidence type="ECO:0000305" key="3"/>
<reference key="1">
    <citation type="journal article" date="1998" name="Science">
        <title>Genome sequence of the nematode C. elegans: a platform for investigating biology.</title>
        <authorList>
            <consortium name="The C. elegans sequencing consortium"/>
        </authorList>
    </citation>
    <scope>NUCLEOTIDE SEQUENCE [LARGE SCALE GENOMIC DNA]</scope>
    <source>
        <strain>Bristol N2</strain>
    </source>
</reference>
<sequence>MLETEHANTEVHELCRQMIARIEKYGTLEGFSDSDILEVLKTIKEILEPLPCLIEIIAPVVVFGDIHGQLGDLLQFTNEVGRPPDFQYLFLGDYVDRGPNSLEVTVWLFCMKILFSKKVHLLRGNHEVRRVNTMYGFKEEMMRKRNSHLWKVFNDVFAELSICASINRKILCMHGGISPKIESWDSLTGMTKPRVHGDCEHGLIVDLIWSDPNRKDDTIQFNKMRGISTLFGKSVVDNLCTTLAIDLIIRAHEMKEKGHTFEFDNRLLTVFSAPYYSGHNSNLGSVATISKSLKLRIVTLKPNKGYDRSKLDKRTLHDFEKNFQPLDENPRKNISCQFNVPPNGQKMSPFLGEYSMFAHETQFCKKDNETPVKKPYSSNQDEDHSVLDMIRKTQKGYGVEVSLKDKVMSLESIRKKLGMTTSTTPPPPRTPSPDAPLAQSPPIPRSPPSSTENA</sequence>
<name>YY06_CAEEL</name>